<feature type="chain" id="PRO_0000162734" description="Uncharacterized RNA pseudouridine synthase jhp_0321">
    <location>
        <begin position="1"/>
        <end position="293"/>
    </location>
</feature>
<feature type="active site" evidence="1">
    <location>
        <position position="119"/>
    </location>
</feature>
<reference key="1">
    <citation type="journal article" date="1999" name="Nature">
        <title>Genomic sequence comparison of two unrelated isolates of the human gastric pathogen Helicobacter pylori.</title>
        <authorList>
            <person name="Alm R.A."/>
            <person name="Ling L.-S.L."/>
            <person name="Moir D.T."/>
            <person name="King B.L."/>
            <person name="Brown E.D."/>
            <person name="Doig P.C."/>
            <person name="Smith D.R."/>
            <person name="Noonan B."/>
            <person name="Guild B.C."/>
            <person name="deJonge B.L."/>
            <person name="Carmel G."/>
            <person name="Tummino P.J."/>
            <person name="Caruso A."/>
            <person name="Uria-Nickelsen M."/>
            <person name="Mills D.M."/>
            <person name="Ives C."/>
            <person name="Gibson R."/>
            <person name="Merberg D."/>
            <person name="Mills S.D."/>
            <person name="Jiang Q."/>
            <person name="Taylor D.E."/>
            <person name="Vovis G.F."/>
            <person name="Trust T.J."/>
        </authorList>
    </citation>
    <scope>NUCLEOTIDE SEQUENCE [LARGE SCALE GENOMIC DNA]</scope>
    <source>
        <strain>J99 / ATCC 700824</strain>
    </source>
</reference>
<sequence>MPFVEEEFEILKPTKALFLVRDVLKCSLKEAQRHLDKQRLKQNQQTVRKSQIIQGVVRLIYFKPNEKQEKLVFEAKDFGVFDKPAQIYTHPKGYFYHESLLDCIQSHFGKNAHPAHRLDYETSGLVLAGKTLQSTKDLKALFMQKKVKKTYLALAHGLVDKSIIINKPILTPQNIQKDLRIRSQISPLGKPSITLVEPLSYNPFLDISLLKITPLTGRTHQIRLHLSSVDHRIVGEGLYGVADENAREYLQLKRENNAPTLMLHAASLEFEFKGAHYKIASPMPERFMPFLKD</sequence>
<accession>Q9ZMA1</accession>
<dbReference type="EC" id="5.4.99.-"/>
<dbReference type="EMBL" id="AE001439">
    <property type="protein sequence ID" value="AAD05911.1"/>
    <property type="molecule type" value="Genomic_DNA"/>
</dbReference>
<dbReference type="PIR" id="A71946">
    <property type="entry name" value="A71946"/>
</dbReference>
<dbReference type="RefSeq" id="WP_001117208.1">
    <property type="nucleotide sequence ID" value="NC_000921.1"/>
</dbReference>
<dbReference type="SMR" id="Q9ZMA1"/>
<dbReference type="KEGG" id="hpj:jhp_0321"/>
<dbReference type="PATRIC" id="fig|85963.30.peg.692"/>
<dbReference type="eggNOG" id="COG0564">
    <property type="taxonomic scope" value="Bacteria"/>
</dbReference>
<dbReference type="Proteomes" id="UP000000804">
    <property type="component" value="Chromosome"/>
</dbReference>
<dbReference type="GO" id="GO:0140098">
    <property type="term" value="F:catalytic activity, acting on RNA"/>
    <property type="evidence" value="ECO:0007669"/>
    <property type="project" value="UniProtKB-ARBA"/>
</dbReference>
<dbReference type="GO" id="GO:0009982">
    <property type="term" value="F:pseudouridine synthase activity"/>
    <property type="evidence" value="ECO:0007669"/>
    <property type="project" value="InterPro"/>
</dbReference>
<dbReference type="GO" id="GO:0003723">
    <property type="term" value="F:RNA binding"/>
    <property type="evidence" value="ECO:0007669"/>
    <property type="project" value="InterPro"/>
</dbReference>
<dbReference type="GO" id="GO:0000455">
    <property type="term" value="P:enzyme-directed rRNA pseudouridine synthesis"/>
    <property type="evidence" value="ECO:0007669"/>
    <property type="project" value="TreeGrafter"/>
</dbReference>
<dbReference type="CDD" id="cd02869">
    <property type="entry name" value="PseudoU_synth_RluA_like"/>
    <property type="match status" value="1"/>
</dbReference>
<dbReference type="Gene3D" id="3.30.2350.10">
    <property type="entry name" value="Pseudouridine synthase"/>
    <property type="match status" value="1"/>
</dbReference>
<dbReference type="InterPro" id="IPR020103">
    <property type="entry name" value="PsdUridine_synth_cat_dom_sf"/>
</dbReference>
<dbReference type="InterPro" id="IPR006224">
    <property type="entry name" value="PsdUridine_synth_RluA-like_CS"/>
</dbReference>
<dbReference type="InterPro" id="IPR006145">
    <property type="entry name" value="PsdUridine_synth_RsuA/RluA"/>
</dbReference>
<dbReference type="InterPro" id="IPR050188">
    <property type="entry name" value="RluA_PseudoU_synthase"/>
</dbReference>
<dbReference type="PANTHER" id="PTHR21600">
    <property type="entry name" value="MITOCHONDRIAL RNA PSEUDOURIDINE SYNTHASE"/>
    <property type="match status" value="1"/>
</dbReference>
<dbReference type="PANTHER" id="PTHR21600:SF44">
    <property type="entry name" value="RIBOSOMAL LARGE SUBUNIT PSEUDOURIDINE SYNTHASE D"/>
    <property type="match status" value="1"/>
</dbReference>
<dbReference type="Pfam" id="PF00849">
    <property type="entry name" value="PseudoU_synth_2"/>
    <property type="match status" value="1"/>
</dbReference>
<dbReference type="SUPFAM" id="SSF55120">
    <property type="entry name" value="Pseudouridine synthase"/>
    <property type="match status" value="1"/>
</dbReference>
<dbReference type="PROSITE" id="PS01129">
    <property type="entry name" value="PSI_RLU"/>
    <property type="match status" value="1"/>
</dbReference>
<organism>
    <name type="scientific">Helicobacter pylori (strain J99 / ATCC 700824)</name>
    <name type="common">Campylobacter pylori J99</name>
    <dbReference type="NCBI Taxonomy" id="85963"/>
    <lineage>
        <taxon>Bacteria</taxon>
        <taxon>Pseudomonadati</taxon>
        <taxon>Campylobacterota</taxon>
        <taxon>Epsilonproteobacteria</taxon>
        <taxon>Campylobacterales</taxon>
        <taxon>Helicobacteraceae</taxon>
        <taxon>Helicobacter</taxon>
    </lineage>
</organism>
<name>Y347_HELPJ</name>
<comment type="catalytic activity">
    <reaction>
        <text>a uridine in RNA = a pseudouridine in RNA</text>
        <dbReference type="Rhea" id="RHEA:48348"/>
        <dbReference type="Rhea" id="RHEA-COMP:12068"/>
        <dbReference type="Rhea" id="RHEA-COMP:12069"/>
        <dbReference type="ChEBI" id="CHEBI:65314"/>
        <dbReference type="ChEBI" id="CHEBI:65315"/>
    </reaction>
</comment>
<comment type="similarity">
    <text evidence="2">Belongs to the pseudouridine synthase RluA family.</text>
</comment>
<gene>
    <name type="ordered locus">jhp_0321</name>
</gene>
<proteinExistence type="inferred from homology"/>
<keyword id="KW-0413">Isomerase</keyword>
<evidence type="ECO:0000250" key="1"/>
<evidence type="ECO:0000305" key="2"/>
<protein>
    <recommendedName>
        <fullName>Uncharacterized RNA pseudouridine synthase jhp_0321</fullName>
        <ecNumber>5.4.99.-</ecNumber>
    </recommendedName>
    <alternativeName>
        <fullName>RNA pseudouridylate synthase</fullName>
    </alternativeName>
    <alternativeName>
        <fullName>RNA-uridine isomerase</fullName>
    </alternativeName>
</protein>